<protein>
    <recommendedName>
        <fullName evidence="1">UPF0102 protein YraN</fullName>
    </recommendedName>
</protein>
<sequence length="131" mass="14903">MAQIPARGDCSRQLTRKQAGDAWEAAARRWLESKGLRFIAANVRERGGEIDLIMRDGKTTVFVEVRYRRSGLYGGAAASVTRSKQHKLLHTARLWLARQNGSFDTVDCRFDVLAFTGNEIEWFRDAFNDHS</sequence>
<name>YRAN_SALEP</name>
<gene>
    <name evidence="1" type="primary">yraN</name>
    <name type="ordered locus">SEN3100</name>
</gene>
<reference key="1">
    <citation type="journal article" date="2008" name="Genome Res.">
        <title>Comparative genome analysis of Salmonella enteritidis PT4 and Salmonella gallinarum 287/91 provides insights into evolutionary and host adaptation pathways.</title>
        <authorList>
            <person name="Thomson N.R."/>
            <person name="Clayton D.J."/>
            <person name="Windhorst D."/>
            <person name="Vernikos G."/>
            <person name="Davidson S."/>
            <person name="Churcher C."/>
            <person name="Quail M.A."/>
            <person name="Stevens M."/>
            <person name="Jones M.A."/>
            <person name="Watson M."/>
            <person name="Barron A."/>
            <person name="Layton A."/>
            <person name="Pickard D."/>
            <person name="Kingsley R.A."/>
            <person name="Bignell A."/>
            <person name="Clark L."/>
            <person name="Harris B."/>
            <person name="Ormond D."/>
            <person name="Abdellah Z."/>
            <person name="Brooks K."/>
            <person name="Cherevach I."/>
            <person name="Chillingworth T."/>
            <person name="Woodward J."/>
            <person name="Norberczak H."/>
            <person name="Lord A."/>
            <person name="Arrowsmith C."/>
            <person name="Jagels K."/>
            <person name="Moule S."/>
            <person name="Mungall K."/>
            <person name="Saunders M."/>
            <person name="Whitehead S."/>
            <person name="Chabalgoity J.A."/>
            <person name="Maskell D."/>
            <person name="Humphreys T."/>
            <person name="Roberts M."/>
            <person name="Barrow P.A."/>
            <person name="Dougan G."/>
            <person name="Parkhill J."/>
        </authorList>
    </citation>
    <scope>NUCLEOTIDE SEQUENCE [LARGE SCALE GENOMIC DNA]</scope>
    <source>
        <strain>P125109</strain>
    </source>
</reference>
<evidence type="ECO:0000255" key="1">
    <source>
        <dbReference type="HAMAP-Rule" id="MF_00048"/>
    </source>
</evidence>
<comment type="similarity">
    <text evidence="1">Belongs to the UPF0102 family.</text>
</comment>
<dbReference type="EMBL" id="AM933172">
    <property type="protein sequence ID" value="CAR34676.1"/>
    <property type="molecule type" value="Genomic_DNA"/>
</dbReference>
<dbReference type="RefSeq" id="WP_000057285.1">
    <property type="nucleotide sequence ID" value="NC_011294.1"/>
</dbReference>
<dbReference type="SMR" id="B5QZT7"/>
<dbReference type="KEGG" id="set:SEN3100"/>
<dbReference type="HOGENOM" id="CLU_115353_1_0_6"/>
<dbReference type="Proteomes" id="UP000000613">
    <property type="component" value="Chromosome"/>
</dbReference>
<dbReference type="GO" id="GO:0003676">
    <property type="term" value="F:nucleic acid binding"/>
    <property type="evidence" value="ECO:0007669"/>
    <property type="project" value="InterPro"/>
</dbReference>
<dbReference type="CDD" id="cd20736">
    <property type="entry name" value="PoNe_Nuclease"/>
    <property type="match status" value="1"/>
</dbReference>
<dbReference type="Gene3D" id="3.40.1350.10">
    <property type="match status" value="1"/>
</dbReference>
<dbReference type="HAMAP" id="MF_00048">
    <property type="entry name" value="UPF0102"/>
    <property type="match status" value="1"/>
</dbReference>
<dbReference type="InterPro" id="IPR011335">
    <property type="entry name" value="Restrct_endonuc-II-like"/>
</dbReference>
<dbReference type="InterPro" id="IPR011856">
    <property type="entry name" value="tRNA_endonuc-like_dom_sf"/>
</dbReference>
<dbReference type="InterPro" id="IPR003509">
    <property type="entry name" value="UPF0102_YraN-like"/>
</dbReference>
<dbReference type="NCBIfam" id="NF009150">
    <property type="entry name" value="PRK12497.1-3"/>
    <property type="match status" value="1"/>
</dbReference>
<dbReference type="NCBIfam" id="TIGR00252">
    <property type="entry name" value="YraN family protein"/>
    <property type="match status" value="1"/>
</dbReference>
<dbReference type="PANTHER" id="PTHR34039">
    <property type="entry name" value="UPF0102 PROTEIN YRAN"/>
    <property type="match status" value="1"/>
</dbReference>
<dbReference type="PANTHER" id="PTHR34039:SF1">
    <property type="entry name" value="UPF0102 PROTEIN YRAN"/>
    <property type="match status" value="1"/>
</dbReference>
<dbReference type="Pfam" id="PF02021">
    <property type="entry name" value="UPF0102"/>
    <property type="match status" value="1"/>
</dbReference>
<dbReference type="SUPFAM" id="SSF52980">
    <property type="entry name" value="Restriction endonuclease-like"/>
    <property type="match status" value="1"/>
</dbReference>
<proteinExistence type="inferred from homology"/>
<feature type="chain" id="PRO_1000091259" description="UPF0102 protein YraN">
    <location>
        <begin position="1"/>
        <end position="131"/>
    </location>
</feature>
<organism>
    <name type="scientific">Salmonella enteritidis PT4 (strain P125109)</name>
    <dbReference type="NCBI Taxonomy" id="550537"/>
    <lineage>
        <taxon>Bacteria</taxon>
        <taxon>Pseudomonadati</taxon>
        <taxon>Pseudomonadota</taxon>
        <taxon>Gammaproteobacteria</taxon>
        <taxon>Enterobacterales</taxon>
        <taxon>Enterobacteriaceae</taxon>
        <taxon>Salmonella</taxon>
    </lineage>
</organism>
<accession>B5QZT7</accession>